<name>HLS1L_ARATH</name>
<dbReference type="EC" id="2.3.1.-"/>
<dbReference type="EMBL" id="AC004401">
    <property type="protein sequence ID" value="AAC17822.1"/>
    <property type="molecule type" value="Genomic_DNA"/>
</dbReference>
<dbReference type="EMBL" id="CP002685">
    <property type="protein sequence ID" value="AEC07401.1"/>
    <property type="molecule type" value="Genomic_DNA"/>
</dbReference>
<dbReference type="EMBL" id="BT030057">
    <property type="protein sequence ID" value="ABN04795.1"/>
    <property type="molecule type" value="mRNA"/>
</dbReference>
<dbReference type="PIR" id="A84620">
    <property type="entry name" value="A84620"/>
</dbReference>
<dbReference type="RefSeq" id="NP_179888.1">
    <molecule id="O64815-1"/>
    <property type="nucleotide sequence ID" value="NM_127870.4"/>
</dbReference>
<dbReference type="BioGRID" id="2189">
    <property type="interactions" value="5"/>
</dbReference>
<dbReference type="FunCoup" id="O64815">
    <property type="interactions" value="278"/>
</dbReference>
<dbReference type="IntAct" id="O64815">
    <property type="interactions" value="5"/>
</dbReference>
<dbReference type="iPTMnet" id="O64815"/>
<dbReference type="PaxDb" id="3702-AT2G23060.1"/>
<dbReference type="ProteomicsDB" id="230247">
    <molecule id="O64815-1"/>
</dbReference>
<dbReference type="EnsemblPlants" id="AT2G23060.1">
    <molecule id="O64815-1"/>
    <property type="protein sequence ID" value="AT2G23060.1"/>
    <property type="gene ID" value="AT2G23060"/>
</dbReference>
<dbReference type="GeneID" id="816836"/>
<dbReference type="Gramene" id="AT2G23060.1">
    <molecule id="O64815-1"/>
    <property type="protein sequence ID" value="AT2G23060.1"/>
    <property type="gene ID" value="AT2G23060"/>
</dbReference>
<dbReference type="KEGG" id="ath:AT2G23060"/>
<dbReference type="Araport" id="AT2G23060"/>
<dbReference type="TAIR" id="AT2G23060"/>
<dbReference type="eggNOG" id="ENOG502QQCN">
    <property type="taxonomic scope" value="Eukaryota"/>
</dbReference>
<dbReference type="HOGENOM" id="CLU_057213_0_0_1"/>
<dbReference type="InParanoid" id="O64815"/>
<dbReference type="OMA" id="WRGVEGF"/>
<dbReference type="PhylomeDB" id="O64815"/>
<dbReference type="PRO" id="PR:O64815"/>
<dbReference type="Proteomes" id="UP000006548">
    <property type="component" value="Chromosome 2"/>
</dbReference>
<dbReference type="ExpressionAtlas" id="O64815">
    <property type="expression patterns" value="baseline and differential"/>
</dbReference>
<dbReference type="GO" id="GO:0016747">
    <property type="term" value="F:acyltransferase activity, transferring groups other than amino-acyl groups"/>
    <property type="evidence" value="ECO:0007669"/>
    <property type="project" value="InterPro"/>
</dbReference>
<dbReference type="CDD" id="cd04301">
    <property type="entry name" value="NAT_SF"/>
    <property type="match status" value="1"/>
</dbReference>
<dbReference type="FunFam" id="3.40.630.30:FF:000084">
    <property type="entry name" value="Probable N-acetyltransferase HLS1-like"/>
    <property type="match status" value="1"/>
</dbReference>
<dbReference type="Gene3D" id="3.40.630.30">
    <property type="match status" value="1"/>
</dbReference>
<dbReference type="InterPro" id="IPR016181">
    <property type="entry name" value="Acyl_CoA_acyltransferase"/>
</dbReference>
<dbReference type="InterPro" id="IPR000182">
    <property type="entry name" value="GNAT_dom"/>
</dbReference>
<dbReference type="InterPro" id="IPR052810">
    <property type="entry name" value="Plant_NAT"/>
</dbReference>
<dbReference type="PANTHER" id="PTHR47370">
    <property type="entry name" value="ACYL-COA N-ACYLTRANSFERASES (NAT) SUPERFAMILY PROTEIN"/>
    <property type="match status" value="1"/>
</dbReference>
<dbReference type="PANTHER" id="PTHR47370:SF7">
    <property type="entry name" value="N-ACETYLTRANSFERASE HLS1-LIKE-RELATED"/>
    <property type="match status" value="1"/>
</dbReference>
<dbReference type="Pfam" id="PF00583">
    <property type="entry name" value="Acetyltransf_1"/>
    <property type="match status" value="1"/>
</dbReference>
<dbReference type="SUPFAM" id="SSF55729">
    <property type="entry name" value="Acyl-CoA N-acyltransferases (Nat)"/>
    <property type="match status" value="1"/>
</dbReference>
<dbReference type="PROSITE" id="PS51186">
    <property type="entry name" value="GNAT"/>
    <property type="match status" value="1"/>
</dbReference>
<reference key="1">
    <citation type="journal article" date="1999" name="Nature">
        <title>Sequence and analysis of chromosome 2 of the plant Arabidopsis thaliana.</title>
        <authorList>
            <person name="Lin X."/>
            <person name="Kaul S."/>
            <person name="Rounsley S.D."/>
            <person name="Shea T.P."/>
            <person name="Benito M.-I."/>
            <person name="Town C.D."/>
            <person name="Fujii C.Y."/>
            <person name="Mason T.M."/>
            <person name="Bowman C.L."/>
            <person name="Barnstead M.E."/>
            <person name="Feldblyum T.V."/>
            <person name="Buell C.R."/>
            <person name="Ketchum K.A."/>
            <person name="Lee J.J."/>
            <person name="Ronning C.M."/>
            <person name="Koo H.L."/>
            <person name="Moffat K.S."/>
            <person name="Cronin L.A."/>
            <person name="Shen M."/>
            <person name="Pai G."/>
            <person name="Van Aken S."/>
            <person name="Umayam L."/>
            <person name="Tallon L.J."/>
            <person name="Gill J.E."/>
            <person name="Adams M.D."/>
            <person name="Carrera A.J."/>
            <person name="Creasy T.H."/>
            <person name="Goodman H.M."/>
            <person name="Somerville C.R."/>
            <person name="Copenhaver G.P."/>
            <person name="Preuss D."/>
            <person name="Nierman W.C."/>
            <person name="White O."/>
            <person name="Eisen J.A."/>
            <person name="Salzberg S.L."/>
            <person name="Fraser C.M."/>
            <person name="Venter J.C."/>
        </authorList>
    </citation>
    <scope>NUCLEOTIDE SEQUENCE [LARGE SCALE GENOMIC DNA]</scope>
    <source>
        <strain>cv. Columbia</strain>
    </source>
</reference>
<reference key="2">
    <citation type="journal article" date="2017" name="Plant J.">
        <title>Araport11: a complete reannotation of the Arabidopsis thaliana reference genome.</title>
        <authorList>
            <person name="Cheng C.Y."/>
            <person name="Krishnakumar V."/>
            <person name="Chan A.P."/>
            <person name="Thibaud-Nissen F."/>
            <person name="Schobel S."/>
            <person name="Town C.D."/>
        </authorList>
    </citation>
    <scope>GENOME REANNOTATION</scope>
    <source>
        <strain>cv. Columbia</strain>
    </source>
</reference>
<reference key="3">
    <citation type="submission" date="2007-01" db="EMBL/GenBank/DDBJ databases">
        <title>Arabidopsis ORF clones.</title>
        <authorList>
            <person name="Bautista V.R."/>
            <person name="Kim C.J."/>
            <person name="Chen H."/>
            <person name="Wu S.Y."/>
            <person name="De Los Reyes C."/>
            <person name="Ecker J.R."/>
        </authorList>
    </citation>
    <scope>NUCLEOTIDE SEQUENCE [LARGE SCALE MRNA]</scope>
    <source>
        <strain>cv. Columbia</strain>
    </source>
</reference>
<evidence type="ECO:0000255" key="1">
    <source>
        <dbReference type="PROSITE-ProRule" id="PRU00532"/>
    </source>
</evidence>
<evidence type="ECO:0000305" key="2"/>
<proteinExistence type="evidence at transcript level"/>
<protein>
    <recommendedName>
        <fullName>Probable N-acetyltransferase HLS1-like</fullName>
        <ecNumber>2.3.1.-</ecNumber>
    </recommendedName>
</protein>
<sequence length="413" mass="46111">MTVLVEVREYDPSKDLATVEDVERRCEVGPAGKLSLFTDLLGDPICRVRHSPSYLMLVAEIGPKEKKELVGMIRGCIKTVTCGITTKRLDLTHNKSQNDVVITKPLYTKLAYILGLRVSPTHRRQGIGFKLVKAMEDWFSQNGAEYSYFATENDNHASVNLFTGKCGYAEFRTPSILVNPVYAHRVNISRRVTVIKLEPSDAELLYRLRFSTTEFFPRDIDSVLNNKLSLGTFVAVPRGSCYGSGSRSWPGSAKFLEYPPDSWAVLSVWNCKDSFRLEVRGASRLRRVVSKATRMVDKTLPFLKIPSIPAVFRPFGLHFMYGIGGEGPRAEKMVKALCDHAHNLAKEGGCGVVAAEVAGEEPLRRGIPHWKVLSCAEDLWCIKRLGEDYSDGSVGDWTKSPPGDSIFVDPREF</sequence>
<keyword id="KW-0012">Acyltransferase</keyword>
<keyword id="KW-0025">Alternative splicing</keyword>
<keyword id="KW-1185">Reference proteome</keyword>
<keyword id="KW-0808">Transferase</keyword>
<gene>
    <name type="ordered locus">At2g23060</name>
    <name type="ORF">F21P24.12</name>
</gene>
<feature type="chain" id="PRO_0000423404" description="Probable N-acetyltransferase HLS1-like">
    <location>
        <begin position="1"/>
        <end position="413"/>
    </location>
</feature>
<feature type="domain" description="N-acetyltransferase" evidence="1">
    <location>
        <begin position="5"/>
        <end position="187"/>
    </location>
</feature>
<accession>O64815</accession>
<organism>
    <name type="scientific">Arabidopsis thaliana</name>
    <name type="common">Mouse-ear cress</name>
    <dbReference type="NCBI Taxonomy" id="3702"/>
    <lineage>
        <taxon>Eukaryota</taxon>
        <taxon>Viridiplantae</taxon>
        <taxon>Streptophyta</taxon>
        <taxon>Embryophyta</taxon>
        <taxon>Tracheophyta</taxon>
        <taxon>Spermatophyta</taxon>
        <taxon>Magnoliopsida</taxon>
        <taxon>eudicotyledons</taxon>
        <taxon>Gunneridae</taxon>
        <taxon>Pentapetalae</taxon>
        <taxon>rosids</taxon>
        <taxon>malvids</taxon>
        <taxon>Brassicales</taxon>
        <taxon>Brassicaceae</taxon>
        <taxon>Camelineae</taxon>
        <taxon>Arabidopsis</taxon>
    </lineage>
</organism>
<comment type="alternative products">
    <event type="alternative splicing"/>
    <isoform>
        <id>O64815-1</id>
        <name>1</name>
        <sequence type="displayed"/>
    </isoform>
    <text>A number of isoforms are produced. According to EST sequences.</text>
</comment>
<comment type="similarity">
    <text evidence="2">Belongs to the acetyltransferase family.</text>
</comment>